<comment type="function">
    <text evidence="1">Catalyzes the condensation of 2 ATP molecules into cyclic di-AMP (c-di-AMP), a second messenger used to regulate differing processes in different bacteria.</text>
</comment>
<comment type="catalytic activity">
    <reaction evidence="1">
        <text>2 ATP = 3',3'-c-di-AMP + 2 diphosphate</text>
        <dbReference type="Rhea" id="RHEA:35655"/>
        <dbReference type="ChEBI" id="CHEBI:30616"/>
        <dbReference type="ChEBI" id="CHEBI:33019"/>
        <dbReference type="ChEBI" id="CHEBI:71500"/>
        <dbReference type="EC" id="2.7.7.85"/>
    </reaction>
</comment>
<comment type="subunit">
    <text evidence="1">Probably oligomerizes.</text>
</comment>
<comment type="subcellular location">
    <subcellularLocation>
        <location evidence="1">Cell membrane</location>
        <topology evidence="1">Single-pass membrane protein</topology>
    </subcellularLocation>
</comment>
<comment type="similarity">
    <text evidence="1">Belongs to the adenylate cyclase family. DacB/CdaS subfamily.</text>
</comment>
<proteinExistence type="evidence at protein level"/>
<dbReference type="EC" id="2.7.7.85" evidence="1"/>
<dbReference type="EMBL" id="U00089">
    <property type="protein sequence ID" value="AAB96236.1"/>
    <property type="molecule type" value="Genomic_DNA"/>
</dbReference>
<dbReference type="PIR" id="S73914">
    <property type="entry name" value="S73914"/>
</dbReference>
<dbReference type="RefSeq" id="NP_109932.1">
    <property type="nucleotide sequence ID" value="NC_000912.1"/>
</dbReference>
<dbReference type="PDB" id="8OFJ">
    <property type="method" value="X-ray"/>
    <property type="resolution" value="2.25 A"/>
    <property type="chains" value="A/B=42-202"/>
</dbReference>
<dbReference type="PDBsum" id="8OFJ"/>
<dbReference type="SMR" id="P75528"/>
<dbReference type="STRING" id="272634.MPN_244"/>
<dbReference type="EnsemblBacteria" id="AAB96236">
    <property type="protein sequence ID" value="AAB96236"/>
    <property type="gene ID" value="MPN_244"/>
</dbReference>
<dbReference type="KEGG" id="mpn:MPN_244"/>
<dbReference type="PATRIC" id="fig|272634.6.peg.263"/>
<dbReference type="HOGENOM" id="CLU_038561_2_0_14"/>
<dbReference type="OrthoDB" id="9807385at2"/>
<dbReference type="BioCyc" id="MPNE272634:G1GJ3-387-MONOMER"/>
<dbReference type="BRENDA" id="2.7.7.85">
    <property type="organism ID" value="3534"/>
</dbReference>
<dbReference type="Proteomes" id="UP000000808">
    <property type="component" value="Chromosome"/>
</dbReference>
<dbReference type="GO" id="GO:0005886">
    <property type="term" value="C:plasma membrane"/>
    <property type="evidence" value="ECO:0007669"/>
    <property type="project" value="UniProtKB-SubCell"/>
</dbReference>
<dbReference type="GO" id="GO:0004016">
    <property type="term" value="F:adenylate cyclase activity"/>
    <property type="evidence" value="ECO:0007669"/>
    <property type="project" value="UniProtKB-UniRule"/>
</dbReference>
<dbReference type="GO" id="GO:0005524">
    <property type="term" value="F:ATP binding"/>
    <property type="evidence" value="ECO:0007669"/>
    <property type="project" value="UniProtKB-UniRule"/>
</dbReference>
<dbReference type="GO" id="GO:0106408">
    <property type="term" value="F:diadenylate cyclase activity"/>
    <property type="evidence" value="ECO:0007669"/>
    <property type="project" value="UniProtKB-EC"/>
</dbReference>
<dbReference type="GO" id="GO:0006171">
    <property type="term" value="P:cAMP biosynthetic process"/>
    <property type="evidence" value="ECO:0007669"/>
    <property type="project" value="InterPro"/>
</dbReference>
<dbReference type="Gene3D" id="3.40.1700.10">
    <property type="entry name" value="DNA integrity scanning protein, DisA, N-terminal domain"/>
    <property type="match status" value="1"/>
</dbReference>
<dbReference type="HAMAP" id="MF_00838">
    <property type="entry name" value="DacB"/>
    <property type="match status" value="1"/>
</dbReference>
<dbReference type="InterPro" id="IPR014046">
    <property type="entry name" value="C-di-AMP_synthase"/>
</dbReference>
<dbReference type="InterPro" id="IPR034701">
    <property type="entry name" value="CdaA"/>
</dbReference>
<dbReference type="InterPro" id="IPR034693">
    <property type="entry name" value="CdaS"/>
</dbReference>
<dbReference type="InterPro" id="IPR050338">
    <property type="entry name" value="DisA"/>
</dbReference>
<dbReference type="InterPro" id="IPR036888">
    <property type="entry name" value="DNA_integrity_DisA_N_sf"/>
</dbReference>
<dbReference type="InterPro" id="IPR003390">
    <property type="entry name" value="DNA_integrity_scan_DisA_N"/>
</dbReference>
<dbReference type="NCBIfam" id="NF038327">
    <property type="entry name" value="c-di-AMP_CdaM"/>
    <property type="match status" value="1"/>
</dbReference>
<dbReference type="NCBIfam" id="TIGR00159">
    <property type="entry name" value="diadenylate cyclase CdaA"/>
    <property type="match status" value="1"/>
</dbReference>
<dbReference type="PANTHER" id="PTHR34185">
    <property type="entry name" value="DIADENYLATE CYCLASE"/>
    <property type="match status" value="1"/>
</dbReference>
<dbReference type="PANTHER" id="PTHR34185:SF1">
    <property type="entry name" value="DIADENYLATE CYCLASE"/>
    <property type="match status" value="1"/>
</dbReference>
<dbReference type="Pfam" id="PF02457">
    <property type="entry name" value="DAC"/>
    <property type="match status" value="1"/>
</dbReference>
<dbReference type="PIRSF" id="PIRSF004793">
    <property type="entry name" value="UCP004793"/>
    <property type="match status" value="1"/>
</dbReference>
<dbReference type="SUPFAM" id="SSF143597">
    <property type="entry name" value="YojJ-like"/>
    <property type="match status" value="1"/>
</dbReference>
<dbReference type="PROSITE" id="PS51794">
    <property type="entry name" value="DAC"/>
    <property type="match status" value="1"/>
</dbReference>
<protein>
    <recommendedName>
        <fullName evidence="1">Diadenylate cyclase</fullName>
        <shortName evidence="1">DAC</shortName>
        <ecNumber evidence="1">2.7.7.85</ecNumber>
    </recommendedName>
    <alternativeName>
        <fullName evidence="1">Cyclic-di-AMP synthase</fullName>
        <shortName evidence="1">c-di-AMP synthase</shortName>
    </alternativeName>
    <alternativeName>
        <fullName evidence="2">Diadenylyl cyclase</fullName>
    </alternativeName>
</protein>
<reference key="1">
    <citation type="journal article" date="1996" name="Nucleic Acids Res.">
        <title>Complete sequence analysis of the genome of the bacterium Mycoplasma pneumoniae.</title>
        <authorList>
            <person name="Himmelreich R."/>
            <person name="Hilbert H."/>
            <person name="Plagens H."/>
            <person name="Pirkl E."/>
            <person name="Li B.-C."/>
            <person name="Herrmann R."/>
        </authorList>
    </citation>
    <scope>NUCLEOTIDE SEQUENCE [LARGE SCALE GENOMIC DNA]</scope>
    <source>
        <strain>ATCC 29342 / M129 / Subtype 1</strain>
    </source>
</reference>
<reference key="2">
    <citation type="journal article" date="2013" name="Nat. Rev. Microbiol.">
        <title>Cyclic di-AMP: another second messenger enters the fray.</title>
        <authorList>
            <person name="Corrigan R.M."/>
            <person name="Gruendling A."/>
        </authorList>
    </citation>
    <scope>GENE NAME</scope>
</reference>
<name>DACB_MYCPN</name>
<gene>
    <name evidence="1 2" type="primary">dacB</name>
    <name type="ordered locus">MPN_244</name>
    <name type="ORF">K04_orf202</name>
    <name type="ORF">MP588</name>
</gene>
<keyword id="KW-0002">3D-structure</keyword>
<keyword id="KW-0067">ATP-binding</keyword>
<keyword id="KW-1003">Cell membrane</keyword>
<keyword id="KW-0472">Membrane</keyword>
<keyword id="KW-0547">Nucleotide-binding</keyword>
<keyword id="KW-0548">Nucleotidyltransferase</keyword>
<keyword id="KW-1185">Reference proteome</keyword>
<keyword id="KW-0808">Transferase</keyword>
<keyword id="KW-0812">Transmembrane</keyword>
<keyword id="KW-1133">Transmembrane helix</keyword>
<organism>
    <name type="scientific">Mycoplasma pneumoniae (strain ATCC 29342 / M129 / Subtype 1)</name>
    <name type="common">Mycoplasmoides pneumoniae</name>
    <dbReference type="NCBI Taxonomy" id="272634"/>
    <lineage>
        <taxon>Bacteria</taxon>
        <taxon>Bacillati</taxon>
        <taxon>Mycoplasmatota</taxon>
        <taxon>Mycoplasmoidales</taxon>
        <taxon>Mycoplasmoidaceae</taxon>
        <taxon>Mycoplasmoides</taxon>
    </lineage>
</organism>
<evidence type="ECO:0000255" key="1">
    <source>
        <dbReference type="HAMAP-Rule" id="MF_00838"/>
    </source>
</evidence>
<evidence type="ECO:0000303" key="2">
    <source>
    </source>
</evidence>
<evidence type="ECO:0007829" key="3">
    <source>
        <dbReference type="PDB" id="8OFJ"/>
    </source>
</evidence>
<feature type="chain" id="PRO_0000210418" description="Diadenylate cyclase">
    <location>
        <begin position="1"/>
        <end position="202"/>
    </location>
</feature>
<feature type="transmembrane region" description="Helical" evidence="1">
    <location>
        <begin position="6"/>
        <end position="26"/>
    </location>
</feature>
<feature type="domain" description="DAC" evidence="1">
    <location>
        <begin position="29"/>
        <end position="185"/>
    </location>
</feature>
<feature type="helix" evidence="3">
    <location>
        <begin position="49"/>
        <end position="68"/>
    </location>
</feature>
<feature type="strand" evidence="3">
    <location>
        <begin position="73"/>
        <end position="77"/>
    </location>
</feature>
<feature type="helix" evidence="3">
    <location>
        <begin position="84"/>
        <end position="87"/>
    </location>
</feature>
<feature type="strand" evidence="3">
    <location>
        <begin position="90"/>
        <end position="96"/>
    </location>
</feature>
<feature type="helix" evidence="3">
    <location>
        <begin position="99"/>
        <end position="107"/>
    </location>
</feature>
<feature type="strand" evidence="3">
    <location>
        <begin position="109"/>
        <end position="111"/>
    </location>
</feature>
<feature type="helix" evidence="3">
    <location>
        <begin position="112"/>
        <end position="114"/>
    </location>
</feature>
<feature type="strand" evidence="3">
    <location>
        <begin position="115"/>
        <end position="121"/>
    </location>
</feature>
<feature type="strand" evidence="3">
    <location>
        <begin position="124"/>
        <end position="130"/>
    </location>
</feature>
<feature type="helix" evidence="3">
    <location>
        <begin position="145"/>
        <end position="156"/>
    </location>
</feature>
<feature type="strand" evidence="3">
    <location>
        <begin position="160"/>
        <end position="164"/>
    </location>
</feature>
<feature type="turn" evidence="3">
    <location>
        <begin position="166"/>
        <end position="168"/>
    </location>
</feature>
<feature type="strand" evidence="3">
    <location>
        <begin position="171"/>
        <end position="175"/>
    </location>
</feature>
<feature type="strand" evidence="3">
    <location>
        <begin position="178"/>
        <end position="181"/>
    </location>
</feature>
<feature type="helix" evidence="3">
    <location>
        <begin position="186"/>
        <end position="196"/>
    </location>
</feature>
<accession>P75528</accession>
<sequence length="202" mass="22733">MMTVEVFSVIILVLLFLILALTLLFVLLNKRTRSFVIRTFTGLFRSKHTTSQKNFYDNLTSTLLRLSTDKIGAIIAIENQDSLESYVNIGYRVTSDFSPELLVTIFYNKQSPLHDGAVIVRDYQIVSVSSYFPMTRQLIDVSYGSRHRSALGLTEKCDAIVFIVSETTGKISVAVRGVIKTLSSNSDRLQDQIIHYLTVKPG</sequence>